<organism>
    <name type="scientific">Vibrio vulnificus (strain YJ016)</name>
    <dbReference type="NCBI Taxonomy" id="196600"/>
    <lineage>
        <taxon>Bacteria</taxon>
        <taxon>Pseudomonadati</taxon>
        <taxon>Pseudomonadota</taxon>
        <taxon>Gammaproteobacteria</taxon>
        <taxon>Vibrionales</taxon>
        <taxon>Vibrionaceae</taxon>
        <taxon>Vibrio</taxon>
    </lineage>
</organism>
<evidence type="ECO:0000255" key="1">
    <source>
        <dbReference type="HAMAP-Rule" id="MF_01011"/>
    </source>
</evidence>
<comment type="function">
    <text evidence="1">Dual-specificity methyltransferase that catalyzes the formation of 5-methyluridine at position 54 (m5U54) in all tRNAs, and that of position 341 (m5U341) in tmRNA (transfer-mRNA).</text>
</comment>
<comment type="catalytic activity">
    <reaction evidence="1">
        <text>uridine(54) in tRNA + S-adenosyl-L-methionine = 5-methyluridine(54) in tRNA + S-adenosyl-L-homocysteine + H(+)</text>
        <dbReference type="Rhea" id="RHEA:42712"/>
        <dbReference type="Rhea" id="RHEA-COMP:10167"/>
        <dbReference type="Rhea" id="RHEA-COMP:10193"/>
        <dbReference type="ChEBI" id="CHEBI:15378"/>
        <dbReference type="ChEBI" id="CHEBI:57856"/>
        <dbReference type="ChEBI" id="CHEBI:59789"/>
        <dbReference type="ChEBI" id="CHEBI:65315"/>
        <dbReference type="ChEBI" id="CHEBI:74447"/>
        <dbReference type="EC" id="2.1.1.35"/>
    </reaction>
</comment>
<comment type="catalytic activity">
    <reaction evidence="1">
        <text>uridine(341) in tmRNA + S-adenosyl-L-methionine = 5-methyluridine(341) in tmRNA + S-adenosyl-L-homocysteine + H(+)</text>
        <dbReference type="Rhea" id="RHEA:43612"/>
        <dbReference type="Rhea" id="RHEA-COMP:10630"/>
        <dbReference type="Rhea" id="RHEA-COMP:10631"/>
        <dbReference type="ChEBI" id="CHEBI:15378"/>
        <dbReference type="ChEBI" id="CHEBI:57856"/>
        <dbReference type="ChEBI" id="CHEBI:59789"/>
        <dbReference type="ChEBI" id="CHEBI:65315"/>
        <dbReference type="ChEBI" id="CHEBI:74447"/>
    </reaction>
</comment>
<comment type="similarity">
    <text evidence="1">Belongs to the class I-like SAM-binding methyltransferase superfamily. RNA M5U methyltransferase family. TrmA subfamily.</text>
</comment>
<sequence length="369" mass="43078">MATLDVNPQRYQQQLAEKVQRLTDMFAPYQAPELEVFESPEQHYRMRAEFRVWHEGEEMYYIMFNQETREKYRVDQFPAASRLINDLMPLLIDAMKDNESLRRKLFQVDFLSTLSGEILVSLLYHRQLDDAWIENAKALKQRLNDEGFDLNLIGRARKMKIVLDRDYVVEKLDVNGKPYVYQQVENSFTQPNGKVAEKMLEWAVDCTQESQGDLLELYCGNGNFSLALAQNFERVLATELAKPSVESAQYNIAANKIENVQIIRMSAEEFTEAMEGKREFRRLKDNGIDLKSYNCNTIFVDPPRSGMDVDTCKMVQGYERILYISCNPETLKENLDILSETHHITRFALFDQFPYTHHMEAGVMLERKA</sequence>
<name>TRMA_VIBVY</name>
<dbReference type="EC" id="2.1.1.-" evidence="1"/>
<dbReference type="EC" id="2.1.1.35" evidence="1"/>
<dbReference type="EMBL" id="BA000037">
    <property type="protein sequence ID" value="BAC92893.1"/>
    <property type="molecule type" value="Genomic_DNA"/>
</dbReference>
<dbReference type="RefSeq" id="WP_011149136.1">
    <property type="nucleotide sequence ID" value="NC_005139.1"/>
</dbReference>
<dbReference type="SMR" id="Q7MQ79"/>
<dbReference type="STRING" id="672.VV93_v1c01160"/>
<dbReference type="KEGG" id="vvy:VV0129"/>
<dbReference type="PATRIC" id="fig|196600.6.peg.177"/>
<dbReference type="eggNOG" id="COG2265">
    <property type="taxonomic scope" value="Bacteria"/>
</dbReference>
<dbReference type="HOGENOM" id="CLU_043022_0_0_6"/>
<dbReference type="Proteomes" id="UP000002675">
    <property type="component" value="Chromosome I"/>
</dbReference>
<dbReference type="GO" id="GO:0005829">
    <property type="term" value="C:cytosol"/>
    <property type="evidence" value="ECO:0007669"/>
    <property type="project" value="TreeGrafter"/>
</dbReference>
<dbReference type="GO" id="GO:0019843">
    <property type="term" value="F:rRNA binding"/>
    <property type="evidence" value="ECO:0007669"/>
    <property type="project" value="TreeGrafter"/>
</dbReference>
<dbReference type="GO" id="GO:0030697">
    <property type="term" value="F:tRNA (uracil(54)-C5)-methyltransferase activity, S-adenosyl methionine-dependent"/>
    <property type="evidence" value="ECO:0007669"/>
    <property type="project" value="UniProtKB-UniRule"/>
</dbReference>
<dbReference type="GO" id="GO:0000049">
    <property type="term" value="F:tRNA binding"/>
    <property type="evidence" value="ECO:0007669"/>
    <property type="project" value="TreeGrafter"/>
</dbReference>
<dbReference type="GO" id="GO:0030488">
    <property type="term" value="P:tRNA methylation"/>
    <property type="evidence" value="ECO:0007669"/>
    <property type="project" value="UniProtKB-UniRule"/>
</dbReference>
<dbReference type="CDD" id="cd02440">
    <property type="entry name" value="AdoMet_MTases"/>
    <property type="match status" value="1"/>
</dbReference>
<dbReference type="FunFam" id="2.40.50.1070:FF:000001">
    <property type="entry name" value="tRNA/tmRNA (uracil-C(5))-methyltransferase"/>
    <property type="match status" value="1"/>
</dbReference>
<dbReference type="FunFam" id="3.40.50.150:FF:000012">
    <property type="entry name" value="tRNA/tmRNA (uracil-C(5))-methyltransferase"/>
    <property type="match status" value="1"/>
</dbReference>
<dbReference type="Gene3D" id="2.40.50.1070">
    <property type="match status" value="1"/>
</dbReference>
<dbReference type="Gene3D" id="3.40.50.150">
    <property type="entry name" value="Vaccinia Virus protein VP39"/>
    <property type="match status" value="1"/>
</dbReference>
<dbReference type="HAMAP" id="MF_01011">
    <property type="entry name" value="RNA_methyltr_TrmA"/>
    <property type="match status" value="1"/>
</dbReference>
<dbReference type="InterPro" id="IPR030390">
    <property type="entry name" value="MeTrfase_TrmA_AS"/>
</dbReference>
<dbReference type="InterPro" id="IPR030391">
    <property type="entry name" value="MeTrfase_TrmA_CS"/>
</dbReference>
<dbReference type="InterPro" id="IPR029063">
    <property type="entry name" value="SAM-dependent_MTases_sf"/>
</dbReference>
<dbReference type="InterPro" id="IPR011869">
    <property type="entry name" value="TrmA_MeTrfase"/>
</dbReference>
<dbReference type="InterPro" id="IPR010280">
    <property type="entry name" value="U5_MeTrfase_fam"/>
</dbReference>
<dbReference type="NCBIfam" id="TIGR02143">
    <property type="entry name" value="trmA_only"/>
    <property type="match status" value="1"/>
</dbReference>
<dbReference type="PANTHER" id="PTHR47790">
    <property type="entry name" value="TRNA/TMRNA (URACIL-C(5))-METHYLTRANSFERASE"/>
    <property type="match status" value="1"/>
</dbReference>
<dbReference type="PANTHER" id="PTHR47790:SF2">
    <property type="entry name" value="TRNA_TMRNA (URACIL-C(5))-METHYLTRANSFERASE"/>
    <property type="match status" value="1"/>
</dbReference>
<dbReference type="Pfam" id="PF05958">
    <property type="entry name" value="tRNA_U5-meth_tr"/>
    <property type="match status" value="1"/>
</dbReference>
<dbReference type="SUPFAM" id="SSF53335">
    <property type="entry name" value="S-adenosyl-L-methionine-dependent methyltransferases"/>
    <property type="match status" value="1"/>
</dbReference>
<dbReference type="PROSITE" id="PS51687">
    <property type="entry name" value="SAM_MT_RNA_M5U"/>
    <property type="match status" value="1"/>
</dbReference>
<dbReference type="PROSITE" id="PS01230">
    <property type="entry name" value="TRMA_1"/>
    <property type="match status" value="1"/>
</dbReference>
<dbReference type="PROSITE" id="PS01231">
    <property type="entry name" value="TRMA_2"/>
    <property type="match status" value="1"/>
</dbReference>
<keyword id="KW-0489">Methyltransferase</keyword>
<keyword id="KW-0949">S-adenosyl-L-methionine</keyword>
<keyword id="KW-0808">Transferase</keyword>
<keyword id="KW-0819">tRNA processing</keyword>
<proteinExistence type="inferred from homology"/>
<protein>
    <recommendedName>
        <fullName evidence="1">tRNA/tmRNA (uracil-C(5))-methyltransferase</fullName>
        <ecNumber evidence="1">2.1.1.-</ecNumber>
        <ecNumber evidence="1">2.1.1.35</ecNumber>
    </recommendedName>
    <alternativeName>
        <fullName evidence="1">tRNA (uracil(54)-C(5))-methyltransferase</fullName>
    </alternativeName>
    <alternativeName>
        <fullName evidence="1">tRNA(m5U54)-methyltransferase</fullName>
        <shortName evidence="1">RUMT</shortName>
    </alternativeName>
    <alternativeName>
        <fullName evidence="1">tmRNA (uracil(341)-C(5))-methyltransferase</fullName>
    </alternativeName>
</protein>
<accession>Q7MQ79</accession>
<reference key="1">
    <citation type="journal article" date="2003" name="Genome Res.">
        <title>Comparative genome analysis of Vibrio vulnificus, a marine pathogen.</title>
        <authorList>
            <person name="Chen C.-Y."/>
            <person name="Wu K.-M."/>
            <person name="Chang Y.-C."/>
            <person name="Chang C.-H."/>
            <person name="Tsai H.-C."/>
            <person name="Liao T.-L."/>
            <person name="Liu Y.-M."/>
            <person name="Chen H.-J."/>
            <person name="Shen A.B.-T."/>
            <person name="Li J.-C."/>
            <person name="Su T.-L."/>
            <person name="Shao C.-P."/>
            <person name="Lee C.-T."/>
            <person name="Hor L.-I."/>
            <person name="Tsai S.-F."/>
        </authorList>
    </citation>
    <scope>NUCLEOTIDE SEQUENCE [LARGE SCALE GENOMIC DNA]</scope>
    <source>
        <strain>YJ016</strain>
    </source>
</reference>
<gene>
    <name evidence="1" type="primary">trmA</name>
    <name type="ordered locus">VV0129</name>
</gene>
<feature type="chain" id="PRO_0000161883" description="tRNA/tmRNA (uracil-C(5))-methyltransferase">
    <location>
        <begin position="1"/>
        <end position="369"/>
    </location>
</feature>
<feature type="active site" description="Nucleophile" evidence="1">
    <location>
        <position position="326"/>
    </location>
</feature>
<feature type="active site" description="Proton acceptor" evidence="1">
    <location>
        <position position="360"/>
    </location>
</feature>
<feature type="binding site" evidence="1">
    <location>
        <position position="190"/>
    </location>
    <ligand>
        <name>S-adenosyl-L-methionine</name>
        <dbReference type="ChEBI" id="CHEBI:59789"/>
    </ligand>
</feature>
<feature type="binding site" evidence="1">
    <location>
        <position position="218"/>
    </location>
    <ligand>
        <name>S-adenosyl-L-methionine</name>
        <dbReference type="ChEBI" id="CHEBI:59789"/>
    </ligand>
</feature>
<feature type="binding site" evidence="1">
    <location>
        <position position="223"/>
    </location>
    <ligand>
        <name>S-adenosyl-L-methionine</name>
        <dbReference type="ChEBI" id="CHEBI:59789"/>
    </ligand>
</feature>
<feature type="binding site" evidence="1">
    <location>
        <position position="239"/>
    </location>
    <ligand>
        <name>S-adenosyl-L-methionine</name>
        <dbReference type="ChEBI" id="CHEBI:59789"/>
    </ligand>
</feature>
<feature type="binding site" evidence="1">
    <location>
        <position position="301"/>
    </location>
    <ligand>
        <name>S-adenosyl-L-methionine</name>
        <dbReference type="ChEBI" id="CHEBI:59789"/>
    </ligand>
</feature>